<keyword id="KW-0012">Acyltransferase</keyword>
<keyword id="KW-0963">Cytoplasm</keyword>
<keyword id="KW-1185">Reference proteome</keyword>
<keyword id="KW-0808">Transferase</keyword>
<dbReference type="EC" id="2.3.2.29" evidence="1"/>
<dbReference type="EMBL" id="CP000264">
    <property type="protein sequence ID" value="ABD54820.1"/>
    <property type="molecule type" value="Genomic_DNA"/>
</dbReference>
<dbReference type="RefSeq" id="WP_011455025.1">
    <property type="nucleotide sequence ID" value="NC_007802.1"/>
</dbReference>
<dbReference type="SMR" id="Q28R42"/>
<dbReference type="STRING" id="290400.Jann_1903"/>
<dbReference type="KEGG" id="jan:Jann_1903"/>
<dbReference type="eggNOG" id="COG2935">
    <property type="taxonomic scope" value="Bacteria"/>
</dbReference>
<dbReference type="HOGENOM" id="CLU_077607_1_0_5"/>
<dbReference type="OrthoDB" id="9782022at2"/>
<dbReference type="Proteomes" id="UP000008326">
    <property type="component" value="Chromosome"/>
</dbReference>
<dbReference type="GO" id="GO:0005737">
    <property type="term" value="C:cytoplasm"/>
    <property type="evidence" value="ECO:0007669"/>
    <property type="project" value="UniProtKB-SubCell"/>
</dbReference>
<dbReference type="GO" id="GO:0004057">
    <property type="term" value="F:arginyl-tRNA--protein transferase activity"/>
    <property type="evidence" value="ECO:0007669"/>
    <property type="project" value="InterPro"/>
</dbReference>
<dbReference type="GO" id="GO:0008914">
    <property type="term" value="F:leucyl-tRNA--protein transferase activity"/>
    <property type="evidence" value="ECO:0007669"/>
    <property type="project" value="UniProtKB-UniRule"/>
</dbReference>
<dbReference type="GO" id="GO:0071596">
    <property type="term" value="P:ubiquitin-dependent protein catabolic process via the N-end rule pathway"/>
    <property type="evidence" value="ECO:0007669"/>
    <property type="project" value="InterPro"/>
</dbReference>
<dbReference type="HAMAP" id="MF_00689">
    <property type="entry name" value="Bpt"/>
    <property type="match status" value="1"/>
</dbReference>
<dbReference type="InterPro" id="IPR016181">
    <property type="entry name" value="Acyl_CoA_acyltransferase"/>
</dbReference>
<dbReference type="InterPro" id="IPR017138">
    <property type="entry name" value="Asp_Glu_LeuTrfase"/>
</dbReference>
<dbReference type="InterPro" id="IPR030700">
    <property type="entry name" value="N-end_Aminoacyl_Trfase"/>
</dbReference>
<dbReference type="InterPro" id="IPR007472">
    <property type="entry name" value="N-end_Aminoacyl_Trfase_C"/>
</dbReference>
<dbReference type="InterPro" id="IPR007471">
    <property type="entry name" value="N-end_Aminoacyl_Trfase_N"/>
</dbReference>
<dbReference type="NCBIfam" id="NF002342">
    <property type="entry name" value="PRK01305.1-3"/>
    <property type="match status" value="1"/>
</dbReference>
<dbReference type="NCBIfam" id="NF002343">
    <property type="entry name" value="PRK01305.1-4"/>
    <property type="match status" value="1"/>
</dbReference>
<dbReference type="NCBIfam" id="NF002346">
    <property type="entry name" value="PRK01305.2-3"/>
    <property type="match status" value="1"/>
</dbReference>
<dbReference type="PANTHER" id="PTHR21367">
    <property type="entry name" value="ARGININE-TRNA-PROTEIN TRANSFERASE 1"/>
    <property type="match status" value="1"/>
</dbReference>
<dbReference type="PANTHER" id="PTHR21367:SF1">
    <property type="entry name" value="ARGINYL-TRNA--PROTEIN TRANSFERASE 1"/>
    <property type="match status" value="1"/>
</dbReference>
<dbReference type="Pfam" id="PF04377">
    <property type="entry name" value="ATE_C"/>
    <property type="match status" value="1"/>
</dbReference>
<dbReference type="Pfam" id="PF04376">
    <property type="entry name" value="ATE_N"/>
    <property type="match status" value="1"/>
</dbReference>
<dbReference type="PIRSF" id="PIRSF037208">
    <property type="entry name" value="ATE_pro_prd"/>
    <property type="match status" value="1"/>
</dbReference>
<dbReference type="SUPFAM" id="SSF55729">
    <property type="entry name" value="Acyl-CoA N-acyltransferases (Nat)"/>
    <property type="match status" value="1"/>
</dbReference>
<organism>
    <name type="scientific">Jannaschia sp. (strain CCS1)</name>
    <dbReference type="NCBI Taxonomy" id="290400"/>
    <lineage>
        <taxon>Bacteria</taxon>
        <taxon>Pseudomonadati</taxon>
        <taxon>Pseudomonadota</taxon>
        <taxon>Alphaproteobacteria</taxon>
        <taxon>Rhodobacterales</taxon>
        <taxon>Roseobacteraceae</taxon>
        <taxon>Jannaschia</taxon>
    </lineage>
</organism>
<accession>Q28R42</accession>
<feature type="chain" id="PRO_0000263189" description="Aspartate/glutamate leucyltransferase">
    <location>
        <begin position="1"/>
        <end position="286"/>
    </location>
</feature>
<sequence>MRHTLPIAPQFYVTAPQACPYLDGRRERKLFTALQGDQAETLNNSLSKQGFRRSQNVLYRPSCTDCAACLSARIRVADFAPRRGHKRISRRNEHLFRNPRSAWATEEQYALFRTYLDTRHADGGMADMDVFEFAAMIEETPVKTRVIEYRDRTDGDDLAAVCLTDILDDGLSLVYSFFAPELQKNSLGTYVILDHIALAQEAGLPYVYLGYWVPGSTKMGYKASFPALEVHVNGDWQDIGDPADYDTQTHPLSTDPIAQQVAQITLPDLRGENGRSDGLRGFSDGP</sequence>
<evidence type="ECO:0000255" key="1">
    <source>
        <dbReference type="HAMAP-Rule" id="MF_00689"/>
    </source>
</evidence>
<protein>
    <recommendedName>
        <fullName evidence="1">Aspartate/glutamate leucyltransferase</fullName>
        <ecNumber evidence="1">2.3.2.29</ecNumber>
    </recommendedName>
</protein>
<name>BPT_JANSC</name>
<comment type="function">
    <text evidence="1">Functions in the N-end rule pathway of protein degradation where it conjugates Leu from its aminoacyl-tRNA to the N-termini of proteins containing an N-terminal aspartate or glutamate.</text>
</comment>
<comment type="catalytic activity">
    <reaction evidence="1">
        <text>N-terminal L-glutamyl-[protein] + L-leucyl-tRNA(Leu) = N-terminal L-leucyl-L-glutamyl-[protein] + tRNA(Leu) + H(+)</text>
        <dbReference type="Rhea" id="RHEA:50412"/>
        <dbReference type="Rhea" id="RHEA-COMP:9613"/>
        <dbReference type="Rhea" id="RHEA-COMP:9622"/>
        <dbReference type="Rhea" id="RHEA-COMP:12664"/>
        <dbReference type="Rhea" id="RHEA-COMP:12668"/>
        <dbReference type="ChEBI" id="CHEBI:15378"/>
        <dbReference type="ChEBI" id="CHEBI:64721"/>
        <dbReference type="ChEBI" id="CHEBI:78442"/>
        <dbReference type="ChEBI" id="CHEBI:78494"/>
        <dbReference type="ChEBI" id="CHEBI:133041"/>
        <dbReference type="EC" id="2.3.2.29"/>
    </reaction>
</comment>
<comment type="catalytic activity">
    <reaction evidence="1">
        <text>N-terminal L-aspartyl-[protein] + L-leucyl-tRNA(Leu) = N-terminal L-leucyl-L-aspartyl-[protein] + tRNA(Leu) + H(+)</text>
        <dbReference type="Rhea" id="RHEA:50420"/>
        <dbReference type="Rhea" id="RHEA-COMP:9613"/>
        <dbReference type="Rhea" id="RHEA-COMP:9622"/>
        <dbReference type="Rhea" id="RHEA-COMP:12669"/>
        <dbReference type="Rhea" id="RHEA-COMP:12674"/>
        <dbReference type="ChEBI" id="CHEBI:15378"/>
        <dbReference type="ChEBI" id="CHEBI:64720"/>
        <dbReference type="ChEBI" id="CHEBI:78442"/>
        <dbReference type="ChEBI" id="CHEBI:78494"/>
        <dbReference type="ChEBI" id="CHEBI:133042"/>
        <dbReference type="EC" id="2.3.2.29"/>
    </reaction>
</comment>
<comment type="subcellular location">
    <subcellularLocation>
        <location evidence="1">Cytoplasm</location>
    </subcellularLocation>
</comment>
<comment type="similarity">
    <text evidence="1">Belongs to the R-transferase family. Bpt subfamily.</text>
</comment>
<proteinExistence type="inferred from homology"/>
<gene>
    <name evidence="1" type="primary">bpt</name>
    <name type="ordered locus">Jann_1903</name>
</gene>
<reference key="1">
    <citation type="submission" date="2006-02" db="EMBL/GenBank/DDBJ databases">
        <title>Complete sequence of chromosome of Jannaschia sp. CCS1.</title>
        <authorList>
            <consortium name="US DOE Joint Genome Institute"/>
            <person name="Copeland A."/>
            <person name="Lucas S."/>
            <person name="Lapidus A."/>
            <person name="Barry K."/>
            <person name="Detter J.C."/>
            <person name="Glavina del Rio T."/>
            <person name="Hammon N."/>
            <person name="Israni S."/>
            <person name="Pitluck S."/>
            <person name="Brettin T."/>
            <person name="Bruce D."/>
            <person name="Han C."/>
            <person name="Tapia R."/>
            <person name="Gilna P."/>
            <person name="Chertkov O."/>
            <person name="Saunders E."/>
            <person name="Schmutz J."/>
            <person name="Larimer F."/>
            <person name="Land M."/>
            <person name="Kyrpides N."/>
            <person name="Lykidis A."/>
            <person name="Moran M.A."/>
            <person name="Belas R."/>
            <person name="Ye W."/>
            <person name="Buchan A."/>
            <person name="Gonzalez J.M."/>
            <person name="Schell M.A."/>
            <person name="Richardson P."/>
        </authorList>
    </citation>
    <scope>NUCLEOTIDE SEQUENCE [LARGE SCALE GENOMIC DNA]</scope>
    <source>
        <strain>CCS1</strain>
    </source>
</reference>